<reference key="1">
    <citation type="journal article" date="2004" name="Nucleic Acids Res.">
        <title>Unique features revealed by the genome sequence of Acinetobacter sp. ADP1, a versatile and naturally transformation competent bacterium.</title>
        <authorList>
            <person name="Barbe V."/>
            <person name="Vallenet D."/>
            <person name="Fonknechten N."/>
            <person name="Kreimeyer A."/>
            <person name="Oztas S."/>
            <person name="Labarre L."/>
            <person name="Cruveiller S."/>
            <person name="Robert C."/>
            <person name="Duprat S."/>
            <person name="Wincker P."/>
            <person name="Ornston L.N."/>
            <person name="Weissenbach J."/>
            <person name="Marliere P."/>
            <person name="Cohen G.N."/>
            <person name="Medigue C."/>
        </authorList>
    </citation>
    <scope>NUCLEOTIDE SEQUENCE [LARGE SCALE GENOMIC DNA]</scope>
    <source>
        <strain>ATCC 33305 / BD413 / ADP1</strain>
    </source>
</reference>
<dbReference type="EMBL" id="CR543861">
    <property type="protein sequence ID" value="CAG69008.1"/>
    <property type="molecule type" value="Genomic_DNA"/>
</dbReference>
<dbReference type="RefSeq" id="WP_004927788.1">
    <property type="nucleotide sequence ID" value="NC_005966.1"/>
</dbReference>
<dbReference type="SMR" id="Q6FAA5"/>
<dbReference type="STRING" id="202950.GCA_001485005_00181"/>
<dbReference type="GeneID" id="45234544"/>
<dbReference type="KEGG" id="aci:ACIAD2210"/>
<dbReference type="eggNOG" id="COG0254">
    <property type="taxonomic scope" value="Bacteria"/>
</dbReference>
<dbReference type="HOGENOM" id="CLU_114306_4_3_6"/>
<dbReference type="OrthoDB" id="9803251at2"/>
<dbReference type="BioCyc" id="ASP62977:ACIAD_RS10130-MONOMER"/>
<dbReference type="Proteomes" id="UP000000430">
    <property type="component" value="Chromosome"/>
</dbReference>
<dbReference type="GO" id="GO:1990904">
    <property type="term" value="C:ribonucleoprotein complex"/>
    <property type="evidence" value="ECO:0007669"/>
    <property type="project" value="UniProtKB-KW"/>
</dbReference>
<dbReference type="GO" id="GO:0005840">
    <property type="term" value="C:ribosome"/>
    <property type="evidence" value="ECO:0007669"/>
    <property type="project" value="UniProtKB-KW"/>
</dbReference>
<dbReference type="GO" id="GO:0046872">
    <property type="term" value="F:metal ion binding"/>
    <property type="evidence" value="ECO:0007669"/>
    <property type="project" value="UniProtKB-KW"/>
</dbReference>
<dbReference type="GO" id="GO:0019843">
    <property type="term" value="F:rRNA binding"/>
    <property type="evidence" value="ECO:0007669"/>
    <property type="project" value="UniProtKB-KW"/>
</dbReference>
<dbReference type="GO" id="GO:0003735">
    <property type="term" value="F:structural constituent of ribosome"/>
    <property type="evidence" value="ECO:0007669"/>
    <property type="project" value="InterPro"/>
</dbReference>
<dbReference type="GO" id="GO:0006412">
    <property type="term" value="P:translation"/>
    <property type="evidence" value="ECO:0007669"/>
    <property type="project" value="UniProtKB-UniRule"/>
</dbReference>
<dbReference type="Gene3D" id="4.10.830.30">
    <property type="entry name" value="Ribosomal protein L31"/>
    <property type="match status" value="1"/>
</dbReference>
<dbReference type="HAMAP" id="MF_00501">
    <property type="entry name" value="Ribosomal_bL31_1"/>
    <property type="match status" value="1"/>
</dbReference>
<dbReference type="InterPro" id="IPR034704">
    <property type="entry name" value="Ribosomal_bL28/bL31-like_sf"/>
</dbReference>
<dbReference type="InterPro" id="IPR002150">
    <property type="entry name" value="Ribosomal_bL31"/>
</dbReference>
<dbReference type="InterPro" id="IPR027491">
    <property type="entry name" value="Ribosomal_bL31_A"/>
</dbReference>
<dbReference type="InterPro" id="IPR042105">
    <property type="entry name" value="Ribosomal_bL31_sf"/>
</dbReference>
<dbReference type="NCBIfam" id="TIGR00105">
    <property type="entry name" value="L31"/>
    <property type="match status" value="1"/>
</dbReference>
<dbReference type="NCBIfam" id="NF000612">
    <property type="entry name" value="PRK00019.1"/>
    <property type="match status" value="1"/>
</dbReference>
<dbReference type="NCBIfam" id="NF001809">
    <property type="entry name" value="PRK00528.1"/>
    <property type="match status" value="1"/>
</dbReference>
<dbReference type="PANTHER" id="PTHR33280">
    <property type="entry name" value="50S RIBOSOMAL PROTEIN L31, CHLOROPLASTIC"/>
    <property type="match status" value="1"/>
</dbReference>
<dbReference type="PANTHER" id="PTHR33280:SF6">
    <property type="entry name" value="LARGE RIBOSOMAL SUBUNIT PROTEIN BL31A"/>
    <property type="match status" value="1"/>
</dbReference>
<dbReference type="Pfam" id="PF01197">
    <property type="entry name" value="Ribosomal_L31"/>
    <property type="match status" value="1"/>
</dbReference>
<dbReference type="PRINTS" id="PR01249">
    <property type="entry name" value="RIBOSOMALL31"/>
</dbReference>
<dbReference type="SUPFAM" id="SSF143800">
    <property type="entry name" value="L28p-like"/>
    <property type="match status" value="1"/>
</dbReference>
<dbReference type="PROSITE" id="PS01143">
    <property type="entry name" value="RIBOSOMAL_L31"/>
    <property type="match status" value="1"/>
</dbReference>
<keyword id="KW-0479">Metal-binding</keyword>
<keyword id="KW-0687">Ribonucleoprotein</keyword>
<keyword id="KW-0689">Ribosomal protein</keyword>
<keyword id="KW-0694">RNA-binding</keyword>
<keyword id="KW-0699">rRNA-binding</keyword>
<keyword id="KW-0862">Zinc</keyword>
<sequence>MRADIHPKYQTLVATCSCGNVIETRSALGKETLYLDVCSACHPFYTGKQKNVDTGGRIDKFKQRFSGMSRSIKR</sequence>
<evidence type="ECO:0000255" key="1">
    <source>
        <dbReference type="HAMAP-Rule" id="MF_00501"/>
    </source>
</evidence>
<evidence type="ECO:0000305" key="2"/>
<gene>
    <name evidence="1" type="primary">rpmE</name>
    <name type="ordered locus">ACIAD2210</name>
</gene>
<name>RL31_ACIAD</name>
<protein>
    <recommendedName>
        <fullName evidence="1">Large ribosomal subunit protein bL31</fullName>
    </recommendedName>
    <alternativeName>
        <fullName evidence="2">50S ribosomal protein L31</fullName>
    </alternativeName>
</protein>
<accession>Q6FAA5</accession>
<feature type="chain" id="PRO_0000173072" description="Large ribosomal subunit protein bL31">
    <location>
        <begin position="1"/>
        <end position="74"/>
    </location>
</feature>
<feature type="binding site" evidence="1">
    <location>
        <position position="16"/>
    </location>
    <ligand>
        <name>Zn(2+)</name>
        <dbReference type="ChEBI" id="CHEBI:29105"/>
    </ligand>
</feature>
<feature type="binding site" evidence="1">
    <location>
        <position position="18"/>
    </location>
    <ligand>
        <name>Zn(2+)</name>
        <dbReference type="ChEBI" id="CHEBI:29105"/>
    </ligand>
</feature>
<feature type="binding site" evidence="1">
    <location>
        <position position="38"/>
    </location>
    <ligand>
        <name>Zn(2+)</name>
        <dbReference type="ChEBI" id="CHEBI:29105"/>
    </ligand>
</feature>
<feature type="binding site" evidence="1">
    <location>
        <position position="41"/>
    </location>
    <ligand>
        <name>Zn(2+)</name>
        <dbReference type="ChEBI" id="CHEBI:29105"/>
    </ligand>
</feature>
<proteinExistence type="inferred from homology"/>
<organism>
    <name type="scientific">Acinetobacter baylyi (strain ATCC 33305 / BD413 / ADP1)</name>
    <dbReference type="NCBI Taxonomy" id="62977"/>
    <lineage>
        <taxon>Bacteria</taxon>
        <taxon>Pseudomonadati</taxon>
        <taxon>Pseudomonadota</taxon>
        <taxon>Gammaproteobacteria</taxon>
        <taxon>Moraxellales</taxon>
        <taxon>Moraxellaceae</taxon>
        <taxon>Acinetobacter</taxon>
    </lineage>
</organism>
<comment type="function">
    <text evidence="1">Binds the 23S rRNA.</text>
</comment>
<comment type="cofactor">
    <cofactor evidence="1">
        <name>Zn(2+)</name>
        <dbReference type="ChEBI" id="CHEBI:29105"/>
    </cofactor>
    <text evidence="1">Binds 1 zinc ion per subunit.</text>
</comment>
<comment type="subunit">
    <text evidence="1">Part of the 50S ribosomal subunit.</text>
</comment>
<comment type="similarity">
    <text evidence="1">Belongs to the bacterial ribosomal protein bL31 family. Type A subfamily.</text>
</comment>